<protein>
    <recommendedName>
        <fullName>Disintegrin EO4A</fullName>
    </recommendedName>
    <alternativeName>
        <fullName>Dim-3 SP6</fullName>
    </alternativeName>
    <alternativeName>
        <fullName>Eo-10</fullName>
    </alternativeName>
    <alternativeName>
        <fullName>Eo-10c1</fullName>
    </alternativeName>
</protein>
<reference key="1">
    <citation type="journal article" date="2006" name="J. Mol. Evol.">
        <title>Molecular cloning of Echis ocellatus disintegrins reveals non-venom-secreted proteins and a pathway for the evolution of ocellatusin.</title>
        <authorList>
            <person name="Juarez P."/>
            <person name="Wagstaff S.C."/>
            <person name="Sanz L."/>
            <person name="Harrison R.A."/>
            <person name="Calvete J.J."/>
        </authorList>
    </citation>
    <scope>NUCLEOTIDE SEQUENCE [MRNA]</scope>
    <source>
        <tissue>Venom gland</tissue>
    </source>
</reference>
<reference key="2">
    <citation type="journal article" date="2003" name="Biochem. J.">
        <title>Snake venom disintegrins: novel dimeric disintegrins and structural diversification by disulphide bond engineering.</title>
        <authorList>
            <person name="Calvete J.J."/>
            <person name="Moreno-Murciano M.P."/>
            <person name="Theakston R.D.G."/>
            <person name="Kisiel D.G."/>
            <person name="Marcinkiewicz C."/>
        </authorList>
    </citation>
    <scope>PROTEIN SEQUENCE OF 48-115</scope>
    <scope>FUNCTION</scope>
    <scope>SUBUNIT</scope>
    <scope>SUBCELLULAR LOCATION</scope>
    <source>
        <tissue>Venom</tissue>
    </source>
</reference>
<proteinExistence type="evidence at protein level"/>
<organism>
    <name type="scientific">Echis ocellatus</name>
    <name type="common">Ocellated saw-scaled viper</name>
    <dbReference type="NCBI Taxonomy" id="99586"/>
    <lineage>
        <taxon>Eukaryota</taxon>
        <taxon>Metazoa</taxon>
        <taxon>Chordata</taxon>
        <taxon>Craniata</taxon>
        <taxon>Vertebrata</taxon>
        <taxon>Euteleostomi</taxon>
        <taxon>Lepidosauria</taxon>
        <taxon>Squamata</taxon>
        <taxon>Bifurcata</taxon>
        <taxon>Unidentata</taxon>
        <taxon>Episquamata</taxon>
        <taxon>Toxicofera</taxon>
        <taxon>Serpentes</taxon>
        <taxon>Colubroidea</taxon>
        <taxon>Viperidae</taxon>
        <taxon>Viperinae</taxon>
        <taxon>Echis</taxon>
    </lineage>
</organism>
<sequence length="128" mass="13925">MIPVLLVTICLAVFPFQGSSIILESGNINDYEIVYPKKVNVLPTGAMNSAHPCCDPVTCQPKQGEHCISGPCCRNCKFLNSGTICKRARGDNLHDYCTGISSDCPRNPYKGKYDPMKWPAAAKGSVLM</sequence>
<accession>Q3BER3</accession>
<accession>Q3BER5</accession>
<accession>Q3BER6</accession>
<dbReference type="EMBL" id="AM117387">
    <property type="protein sequence ID" value="CAJ40964.1"/>
    <property type="molecule type" value="mRNA"/>
</dbReference>
<dbReference type="EMBL" id="AM117388">
    <property type="protein sequence ID" value="CAJ40965.1"/>
    <property type="molecule type" value="mRNA"/>
</dbReference>
<dbReference type="EMBL" id="AM117390">
    <property type="protein sequence ID" value="CAJ40967.1"/>
    <property type="molecule type" value="mRNA"/>
</dbReference>
<dbReference type="SMR" id="Q3BER3"/>
<dbReference type="GO" id="GO:0005576">
    <property type="term" value="C:extracellular region"/>
    <property type="evidence" value="ECO:0007669"/>
    <property type="project" value="UniProtKB-SubCell"/>
</dbReference>
<dbReference type="GO" id="GO:0090729">
    <property type="term" value="F:toxin activity"/>
    <property type="evidence" value="ECO:0007669"/>
    <property type="project" value="UniProtKB-KW"/>
</dbReference>
<dbReference type="Gene3D" id="4.10.70.10">
    <property type="entry name" value="Disintegrin domain"/>
    <property type="match status" value="1"/>
</dbReference>
<dbReference type="InterPro" id="IPR018358">
    <property type="entry name" value="Disintegrin_CS"/>
</dbReference>
<dbReference type="InterPro" id="IPR001762">
    <property type="entry name" value="Disintegrin_dom"/>
</dbReference>
<dbReference type="InterPro" id="IPR036436">
    <property type="entry name" value="Disintegrin_dom_sf"/>
</dbReference>
<dbReference type="PANTHER" id="PTHR11905">
    <property type="entry name" value="ADAM A DISINTEGRIN AND METALLOPROTEASE DOMAIN"/>
    <property type="match status" value="1"/>
</dbReference>
<dbReference type="PANTHER" id="PTHR11905:SF159">
    <property type="entry name" value="ADAM METALLOPROTEASE"/>
    <property type="match status" value="1"/>
</dbReference>
<dbReference type="Pfam" id="PF00200">
    <property type="entry name" value="Disintegrin"/>
    <property type="match status" value="1"/>
</dbReference>
<dbReference type="PRINTS" id="PR00289">
    <property type="entry name" value="DISINTEGRIN"/>
</dbReference>
<dbReference type="SMART" id="SM00050">
    <property type="entry name" value="DISIN"/>
    <property type="match status" value="1"/>
</dbReference>
<dbReference type="SUPFAM" id="SSF57552">
    <property type="entry name" value="Blood coagulation inhibitor (disintegrin)"/>
    <property type="match status" value="1"/>
</dbReference>
<dbReference type="PROSITE" id="PS00427">
    <property type="entry name" value="DISINTEGRIN_1"/>
    <property type="match status" value="1"/>
</dbReference>
<dbReference type="PROSITE" id="PS50214">
    <property type="entry name" value="DISINTEGRIN_2"/>
    <property type="match status" value="1"/>
</dbReference>
<comment type="function">
    <text evidence="3">Poor inhibitor of platelet aggregation. The disintegrin inhibits the adhesion of cells expressing the RGD-dependent integrin alpha-5/beta-1 (ITGA5/ITGB1) to immobilized fibronectin. Inhibition on alpha-2b/beta-3 (ITGA2B/ITGB3) is low.</text>
</comment>
<comment type="subunit">
    <text evidence="3">Heterodimer with EO5B; disulfide-linked.</text>
</comment>
<comment type="subcellular location">
    <subcellularLocation>
        <location evidence="3">Secreted</location>
    </subcellularLocation>
</comment>
<comment type="tissue specificity">
    <text>Expressed by the venom gland.</text>
</comment>
<comment type="miscellaneous">
    <text evidence="5">Negative results: does not inhibit alpha-1/beta-1 (ITGA1/ITGB1), alpha-2/beta-1 (ITGA2/ITGB1) and alpha-6/beta-1 (ITGA6/ITGB1) integrins.</text>
</comment>
<comment type="similarity">
    <text evidence="4">Belongs to the disintegrin family. Dimeric disintegrin subfamily.</text>
</comment>
<name>DID4A_ECHOC</name>
<feature type="signal peptide" evidence="1">
    <location>
        <begin position="1"/>
        <end position="20"/>
    </location>
</feature>
<feature type="propeptide" id="PRO_0000319016" evidence="3">
    <location>
        <begin position="21"/>
        <end position="47"/>
    </location>
</feature>
<feature type="chain" id="PRO_5000076907" description="Disintegrin EO4A">
    <location>
        <begin position="48"/>
        <end position="114"/>
    </location>
</feature>
<feature type="propeptide" id="PRO_0000319017" evidence="1">
    <location>
        <begin position="115"/>
        <end position="128"/>
    </location>
</feature>
<feature type="domain" description="Disintegrin" evidence="2">
    <location>
        <begin position="26"/>
        <end position="112"/>
    </location>
</feature>
<feature type="short sequence motif" description="Cell attachment site">
    <location>
        <begin position="89"/>
        <end position="91"/>
    </location>
</feature>
<feature type="disulfide bond" evidence="2">
    <location>
        <begin position="53"/>
        <end position="76"/>
    </location>
</feature>
<feature type="disulfide bond" description="Interchain" evidence="2">
    <location>
        <position position="54"/>
    </location>
</feature>
<feature type="disulfide bond" description="Interchain" evidence="2">
    <location>
        <position position="59"/>
    </location>
</feature>
<feature type="disulfide bond" evidence="2">
    <location>
        <begin position="67"/>
        <end position="73"/>
    </location>
</feature>
<feature type="disulfide bond" evidence="2">
    <location>
        <begin position="72"/>
        <end position="97"/>
    </location>
</feature>
<feature type="disulfide bond" evidence="2">
    <location>
        <begin position="85"/>
        <end position="104"/>
    </location>
</feature>
<feature type="sequence conflict" description="In Ref. 1; CAJ40967." evidence="4" ref="1">
    <original>R</original>
    <variation>K</variation>
    <location>
        <position position="89"/>
    </location>
</feature>
<feature type="sequence conflict" description="In Ref. 2; AA sequence." evidence="4" ref="2">
    <original>H</original>
    <variation>N</variation>
    <location>
        <position position="94"/>
    </location>
</feature>
<feature type="sequence conflict" description="In Ref. 1; CAJ40965." evidence="4" ref="1">
    <original>S</original>
    <variation>P</variation>
    <location>
        <position position="101"/>
    </location>
</feature>
<feature type="sequence conflict" description="In Ref. 2; AA sequence." evidence="4" ref="2">
    <original>GKYDP</original>
    <variation>SEEED</variation>
    <location>
        <begin position="111"/>
        <end position="115"/>
    </location>
</feature>
<keyword id="KW-1217">Cell adhesion impairing toxin</keyword>
<keyword id="KW-0903">Direct protein sequencing</keyword>
<keyword id="KW-1015">Disulfide bond</keyword>
<keyword id="KW-1199">Hemostasis impairing toxin</keyword>
<keyword id="KW-1201">Platelet aggregation inhibiting toxin</keyword>
<keyword id="KW-0964">Secreted</keyword>
<keyword id="KW-0732">Signal</keyword>
<keyword id="KW-0800">Toxin</keyword>
<evidence type="ECO:0000255" key="1"/>
<evidence type="ECO:0000255" key="2">
    <source>
        <dbReference type="PROSITE-ProRule" id="PRU00068"/>
    </source>
</evidence>
<evidence type="ECO:0000269" key="3">
    <source>
    </source>
</evidence>
<evidence type="ECO:0000305" key="4"/>
<evidence type="ECO:0000305" key="5">
    <source>
    </source>
</evidence>